<organism>
    <name type="scientific">Cronobacter sakazakii (strain ATCC BAA-894)</name>
    <name type="common">Enterobacter sakazakii</name>
    <dbReference type="NCBI Taxonomy" id="290339"/>
    <lineage>
        <taxon>Bacteria</taxon>
        <taxon>Pseudomonadati</taxon>
        <taxon>Pseudomonadota</taxon>
        <taxon>Gammaproteobacteria</taxon>
        <taxon>Enterobacterales</taxon>
        <taxon>Enterobacteriaceae</taxon>
        <taxon>Cronobacter</taxon>
    </lineage>
</organism>
<comment type="function">
    <text evidence="1">3'-5' exonuclease that prefers single-stranded DNA and RNA. May play a role in the H(2)O(2)-induced DNA damage repair.</text>
</comment>
<comment type="cofactor">
    <cofactor evidence="1">
        <name>Mg(2+)</name>
        <dbReference type="ChEBI" id="CHEBI:18420"/>
    </cofactor>
</comment>
<comment type="subunit">
    <text evidence="1">Monomer.</text>
</comment>
<comment type="subcellular location">
    <subcellularLocation>
        <location evidence="1">Cytoplasm</location>
    </subcellularLocation>
</comment>
<comment type="similarity">
    <text evidence="1">Belongs to the metallo-dependent hydrolases superfamily. TatD-type hydrolase family. TatD subfamily.</text>
</comment>
<comment type="sequence caution" evidence="2">
    <conflict type="erroneous initiation">
        <sequence resource="EMBL-CDS" id="ABU78918"/>
    </conflict>
    <text>Extended N-terminus.</text>
</comment>
<keyword id="KW-0963">Cytoplasm</keyword>
<keyword id="KW-0269">Exonuclease</keyword>
<keyword id="KW-0378">Hydrolase</keyword>
<keyword id="KW-0460">Magnesium</keyword>
<keyword id="KW-0479">Metal-binding</keyword>
<keyword id="KW-0540">Nuclease</keyword>
<keyword id="KW-1185">Reference proteome</keyword>
<reference key="1">
    <citation type="journal article" date="2010" name="PLoS ONE">
        <title>Genome sequence of Cronobacter sakazakii BAA-894 and comparative genomic hybridization analysis with other Cronobacter species.</title>
        <authorList>
            <person name="Kucerova E."/>
            <person name="Clifton S.W."/>
            <person name="Xia X.Q."/>
            <person name="Long F."/>
            <person name="Porwollik S."/>
            <person name="Fulton L."/>
            <person name="Fronick C."/>
            <person name="Minx P."/>
            <person name="Kyung K."/>
            <person name="Warren W."/>
            <person name="Fulton R."/>
            <person name="Feng D."/>
            <person name="Wollam A."/>
            <person name="Shah N."/>
            <person name="Bhonagiri V."/>
            <person name="Nash W.E."/>
            <person name="Hallsworth-Pepin K."/>
            <person name="Wilson R.K."/>
            <person name="McClelland M."/>
            <person name="Forsythe S.J."/>
        </authorList>
    </citation>
    <scope>NUCLEOTIDE SEQUENCE [LARGE SCALE GENOMIC DNA]</scope>
    <source>
        <strain>ATCC BAA-894</strain>
    </source>
</reference>
<gene>
    <name evidence="1" type="primary">tatD</name>
    <name type="ordered locus">ESA_03721</name>
</gene>
<dbReference type="EC" id="3.1.11.-" evidence="1"/>
<dbReference type="EC" id="3.1.13.-" evidence="1"/>
<dbReference type="EMBL" id="CP000783">
    <property type="protein sequence ID" value="ABU78918.1"/>
    <property type="status" value="ALT_INIT"/>
    <property type="molecule type" value="Genomic_DNA"/>
</dbReference>
<dbReference type="SMR" id="A7MQN1"/>
<dbReference type="KEGG" id="esa:ESA_03721"/>
<dbReference type="PATRIC" id="fig|290339.8.peg.3308"/>
<dbReference type="HOGENOM" id="CLU_031506_1_2_6"/>
<dbReference type="Proteomes" id="UP000000260">
    <property type="component" value="Chromosome"/>
</dbReference>
<dbReference type="GO" id="GO:0005737">
    <property type="term" value="C:cytoplasm"/>
    <property type="evidence" value="ECO:0007669"/>
    <property type="project" value="UniProtKB-SubCell"/>
</dbReference>
<dbReference type="GO" id="GO:0000175">
    <property type="term" value="F:3'-5'-RNA exonuclease activity"/>
    <property type="evidence" value="ECO:0007669"/>
    <property type="project" value="UniProtKB-UniRule"/>
</dbReference>
<dbReference type="GO" id="GO:0000287">
    <property type="term" value="F:magnesium ion binding"/>
    <property type="evidence" value="ECO:0007669"/>
    <property type="project" value="UniProtKB-UniRule"/>
</dbReference>
<dbReference type="GO" id="GO:0008310">
    <property type="term" value="F:single-stranded DNA 3'-5' DNA exonuclease activity"/>
    <property type="evidence" value="ECO:0007669"/>
    <property type="project" value="UniProtKB-UniRule"/>
</dbReference>
<dbReference type="CDD" id="cd01310">
    <property type="entry name" value="TatD_DNAse"/>
    <property type="match status" value="1"/>
</dbReference>
<dbReference type="FunFam" id="3.20.20.140:FF:000018">
    <property type="entry name" value="3'-5' ssDNA/RNA exonuclease TatD"/>
    <property type="match status" value="1"/>
</dbReference>
<dbReference type="Gene3D" id="3.20.20.140">
    <property type="entry name" value="Metal-dependent hydrolases"/>
    <property type="match status" value="1"/>
</dbReference>
<dbReference type="HAMAP" id="MF_00901">
    <property type="entry name" value="TatD_exonuclease"/>
    <property type="match status" value="1"/>
</dbReference>
<dbReference type="InterPro" id="IPR018228">
    <property type="entry name" value="DNase_TatD-rel_CS"/>
</dbReference>
<dbReference type="InterPro" id="IPR024918">
    <property type="entry name" value="Exonuc_TatD"/>
</dbReference>
<dbReference type="InterPro" id="IPR032466">
    <property type="entry name" value="Metal_Hydrolase"/>
</dbReference>
<dbReference type="InterPro" id="IPR001130">
    <property type="entry name" value="TatD-like"/>
</dbReference>
<dbReference type="InterPro" id="IPR050891">
    <property type="entry name" value="TatD-type_Hydrolase"/>
</dbReference>
<dbReference type="NCBIfam" id="NF007745">
    <property type="entry name" value="PRK10425.1"/>
    <property type="match status" value="1"/>
</dbReference>
<dbReference type="PANTHER" id="PTHR10060:SF15">
    <property type="entry name" value="DEOXYRIBONUCLEASE TATDN1"/>
    <property type="match status" value="1"/>
</dbReference>
<dbReference type="PANTHER" id="PTHR10060">
    <property type="entry name" value="TATD FAMILY DEOXYRIBONUCLEASE"/>
    <property type="match status" value="1"/>
</dbReference>
<dbReference type="Pfam" id="PF01026">
    <property type="entry name" value="TatD_DNase"/>
    <property type="match status" value="1"/>
</dbReference>
<dbReference type="PIRSF" id="PIRSF005902">
    <property type="entry name" value="DNase_TatD"/>
    <property type="match status" value="1"/>
</dbReference>
<dbReference type="SUPFAM" id="SSF51556">
    <property type="entry name" value="Metallo-dependent hydrolases"/>
    <property type="match status" value="1"/>
</dbReference>
<dbReference type="PROSITE" id="PS01091">
    <property type="entry name" value="TATD_3"/>
    <property type="match status" value="1"/>
</dbReference>
<protein>
    <recommendedName>
        <fullName evidence="1">3'-5' ssDNA/RNA exonuclease TatD</fullName>
        <ecNumber evidence="1">3.1.11.-</ecNumber>
        <ecNumber evidence="1">3.1.13.-</ecNumber>
    </recommendedName>
    <alternativeName>
        <fullName evidence="1">DNase TatD</fullName>
    </alternativeName>
</protein>
<proteinExistence type="inferred from homology"/>
<feature type="chain" id="PRO_0000412737" description="3'-5' ssDNA/RNA exonuclease TatD">
    <location>
        <begin position="1"/>
        <end position="263"/>
    </location>
</feature>
<feature type="binding site" evidence="1">
    <location>
        <position position="91"/>
    </location>
    <ligand>
        <name>a divalent metal cation</name>
        <dbReference type="ChEBI" id="CHEBI:60240"/>
    </ligand>
</feature>
<feature type="binding site" evidence="1">
    <location>
        <position position="127"/>
    </location>
    <ligand>
        <name>a divalent metal cation</name>
        <dbReference type="ChEBI" id="CHEBI:60240"/>
    </ligand>
</feature>
<feature type="binding site" evidence="1">
    <location>
        <position position="152"/>
    </location>
    <ligand>
        <name>a divalent metal cation</name>
        <dbReference type="ChEBI" id="CHEBI:60240"/>
    </ligand>
</feature>
<sequence length="263" mass="29288">MFDIGLNITSSQFDHDRDEMIARARAAGVSNMLFTGTSLEESEKACAFARRYEGCWSTAGVHPHDASTWNDESAARLRALAGEAQVVAIGECGLDFNRNFSTPAEQEHAFTEQLRLAAELALPVFLHCRDAHARFLALLDPWLDKLPGAVLHCFTGTEQEARETMARGLYLGITGWVCDERRGLELRALLPVIPADRLLLETDAPYLLPRDLAPRPKSRRNEPCWLPHILKQVAQWRGEDPAWLEATTDANAARLFLKNASPA</sequence>
<accession>A7MQN1</accession>
<evidence type="ECO:0000255" key="1">
    <source>
        <dbReference type="HAMAP-Rule" id="MF_00901"/>
    </source>
</evidence>
<evidence type="ECO:0000305" key="2"/>
<name>TATD_CROS8</name>